<comment type="function">
    <text evidence="1">Mediates visceral muscle contractile activity (myotropic activity).</text>
</comment>
<comment type="subcellular location">
    <subcellularLocation>
        <location>Secreted</location>
    </subcellularLocation>
</comment>
<comment type="mass spectrometry" mass="949.26" method="Electrospray" evidence="1"/>
<comment type="similarity">
    <text evidence="2">Belongs to the kinin family.</text>
</comment>
<accession>P82685</accession>
<feature type="peptide" id="PRO_0000043962" description="Kinin-1">
    <location>
        <begin position="1"/>
        <end position="8"/>
    </location>
</feature>
<feature type="modified residue" description="Glycine amide" evidence="1">
    <location>
        <position position="8"/>
    </location>
</feature>
<name>KINI1_PERAM</name>
<reference key="1">
    <citation type="journal article" date="1997" name="Regul. Pept.">
        <title>Isolation and structural elucidation of eight kinins from the retrocerebral complex of the American cockroach, Periplaneta americana.</title>
        <authorList>
            <person name="Predel R."/>
            <person name="Kellner R."/>
            <person name="Rapus J."/>
            <person name="Penzlin H."/>
            <person name="Gade G."/>
        </authorList>
    </citation>
    <scope>PROTEIN SEQUENCE</scope>
    <scope>FUNCTION</scope>
    <scope>MASS SPECTROMETRY</scope>
    <scope>AMIDATION AT GLY-8</scope>
    <source>
        <tissue>Corpora cardiaca</tissue>
    </source>
</reference>
<evidence type="ECO:0000269" key="1">
    <source>
    </source>
</evidence>
<evidence type="ECO:0000305" key="2"/>
<sequence length="8" mass="950">RPSFNSWG</sequence>
<protein>
    <recommendedName>
        <fullName>Kinin-1</fullName>
    </recommendedName>
    <alternativeName>
        <fullName>Pea-K-1</fullName>
    </alternativeName>
</protein>
<organism>
    <name type="scientific">Periplaneta americana</name>
    <name type="common">American cockroach</name>
    <name type="synonym">Blatta americana</name>
    <dbReference type="NCBI Taxonomy" id="6978"/>
    <lineage>
        <taxon>Eukaryota</taxon>
        <taxon>Metazoa</taxon>
        <taxon>Ecdysozoa</taxon>
        <taxon>Arthropoda</taxon>
        <taxon>Hexapoda</taxon>
        <taxon>Insecta</taxon>
        <taxon>Pterygota</taxon>
        <taxon>Neoptera</taxon>
        <taxon>Polyneoptera</taxon>
        <taxon>Dictyoptera</taxon>
        <taxon>Blattodea</taxon>
        <taxon>Blattoidea</taxon>
        <taxon>Blattidae</taxon>
        <taxon>Blattinae</taxon>
        <taxon>Periplaneta</taxon>
    </lineage>
</organism>
<proteinExistence type="evidence at protein level"/>
<dbReference type="GO" id="GO:0005576">
    <property type="term" value="C:extracellular region"/>
    <property type="evidence" value="ECO:0007669"/>
    <property type="project" value="UniProtKB-SubCell"/>
</dbReference>
<dbReference type="GO" id="GO:0007218">
    <property type="term" value="P:neuropeptide signaling pathway"/>
    <property type="evidence" value="ECO:0007669"/>
    <property type="project" value="UniProtKB-KW"/>
</dbReference>
<dbReference type="InterPro" id="IPR013202">
    <property type="entry name" value="Kinin_peptide"/>
</dbReference>
<dbReference type="Pfam" id="PF08260">
    <property type="entry name" value="Kinin"/>
    <property type="match status" value="1"/>
</dbReference>
<keyword id="KW-0027">Amidation</keyword>
<keyword id="KW-0903">Direct protein sequencing</keyword>
<keyword id="KW-0527">Neuropeptide</keyword>
<keyword id="KW-0964">Secreted</keyword>